<sequence>MSDIGVYNAAFGPDRAGLRNLKRVFWNLEAPSLYEQALQRGEAQLAAGGALVAETGIHTGRSPKDKFVVRDSGTEDQVWWDNNGAITAEQFDRLHADFVAHAEGKDLFAQDLYGGAEPAYRVRARVYTEYAWHSLFIRNLLIRPERDALGAYEPDLTIIDLPSFKADPARHGVRSETVIACDFTRKIVLIGGSSYAGEMKKSVFTYLNYILPKAGVMPMHCSANVGAQGDSALFFGLSGTGKTTLSNDPARVLLGDDEHGWGPKGIFNFEGGCYAKTIRLSREAEPEIYATTERFGTVMENVVIDPVTRLPDFDDASKTENTRCAYPLPFIPNASATGRAGHPKNIVMLTCDAFGVLPPIAKLTGAEAMYHFLSGYTAKVAGTEKGLKGPEATFSTCFGAPFMPRHPSVYGNLLRDLIARHHVDCWLVNTGWTGGGVGTGRRMPIRVTRRLLTAALDGSLAKADYRRDPYFGFAVPTSVPGVEPHILYPVKTWADKAAFAETAKRLVEMFQANFKRFEAHVDADVRAAEPTMSIAA</sequence>
<feature type="chain" id="PRO_1000125076" description="Phosphoenolpyruvate carboxykinase (ATP)">
    <location>
        <begin position="1"/>
        <end position="536"/>
    </location>
</feature>
<feature type="binding site" evidence="1">
    <location>
        <position position="61"/>
    </location>
    <ligand>
        <name>substrate</name>
    </ligand>
</feature>
<feature type="binding site" evidence="1">
    <location>
        <position position="195"/>
    </location>
    <ligand>
        <name>substrate</name>
    </ligand>
</feature>
<feature type="binding site" evidence="1">
    <location>
        <position position="201"/>
    </location>
    <ligand>
        <name>ATP</name>
        <dbReference type="ChEBI" id="CHEBI:30616"/>
    </ligand>
</feature>
<feature type="binding site" evidence="1">
    <location>
        <position position="201"/>
    </location>
    <ligand>
        <name>Mn(2+)</name>
        <dbReference type="ChEBI" id="CHEBI:29035"/>
    </ligand>
</feature>
<feature type="binding site" evidence="1">
    <location>
        <position position="201"/>
    </location>
    <ligand>
        <name>substrate</name>
    </ligand>
</feature>
<feature type="binding site" evidence="1">
    <location>
        <position position="220"/>
    </location>
    <ligand>
        <name>ATP</name>
        <dbReference type="ChEBI" id="CHEBI:30616"/>
    </ligand>
</feature>
<feature type="binding site" evidence="1">
    <location>
        <position position="220"/>
    </location>
    <ligand>
        <name>Mn(2+)</name>
        <dbReference type="ChEBI" id="CHEBI:29035"/>
    </ligand>
</feature>
<feature type="binding site" evidence="1">
    <location>
        <begin position="236"/>
        <end position="244"/>
    </location>
    <ligand>
        <name>ATP</name>
        <dbReference type="ChEBI" id="CHEBI:30616"/>
    </ligand>
</feature>
<feature type="binding site" evidence="1">
    <location>
        <position position="257"/>
    </location>
    <ligand>
        <name>Mn(2+)</name>
        <dbReference type="ChEBI" id="CHEBI:29035"/>
    </ligand>
</feature>
<feature type="binding site" evidence="1">
    <location>
        <position position="285"/>
    </location>
    <ligand>
        <name>ATP</name>
        <dbReference type="ChEBI" id="CHEBI:30616"/>
    </ligand>
</feature>
<feature type="binding site" evidence="1">
    <location>
        <position position="323"/>
    </location>
    <ligand>
        <name>ATP</name>
        <dbReference type="ChEBI" id="CHEBI:30616"/>
    </ligand>
</feature>
<feature type="binding site" evidence="1">
    <location>
        <position position="323"/>
    </location>
    <ligand>
        <name>substrate</name>
    </ligand>
</feature>
<feature type="binding site" evidence="1">
    <location>
        <position position="448"/>
    </location>
    <ligand>
        <name>ATP</name>
        <dbReference type="ChEBI" id="CHEBI:30616"/>
    </ligand>
</feature>
<organism>
    <name type="scientific">Methylobacterium sp. (strain 4-46)</name>
    <dbReference type="NCBI Taxonomy" id="426117"/>
    <lineage>
        <taxon>Bacteria</taxon>
        <taxon>Pseudomonadati</taxon>
        <taxon>Pseudomonadota</taxon>
        <taxon>Alphaproteobacteria</taxon>
        <taxon>Hyphomicrobiales</taxon>
        <taxon>Methylobacteriaceae</taxon>
        <taxon>Methylobacterium</taxon>
    </lineage>
</organism>
<reference key="1">
    <citation type="submission" date="2008-02" db="EMBL/GenBank/DDBJ databases">
        <title>Complete sequence of chromosome of Methylobacterium sp. 4-46.</title>
        <authorList>
            <consortium name="US DOE Joint Genome Institute"/>
            <person name="Copeland A."/>
            <person name="Lucas S."/>
            <person name="Lapidus A."/>
            <person name="Glavina del Rio T."/>
            <person name="Dalin E."/>
            <person name="Tice H."/>
            <person name="Bruce D."/>
            <person name="Goodwin L."/>
            <person name="Pitluck S."/>
            <person name="Chertkov O."/>
            <person name="Brettin T."/>
            <person name="Detter J.C."/>
            <person name="Han C."/>
            <person name="Kuske C.R."/>
            <person name="Schmutz J."/>
            <person name="Larimer F."/>
            <person name="Land M."/>
            <person name="Hauser L."/>
            <person name="Kyrpides N."/>
            <person name="Ivanova N."/>
            <person name="Marx C.J."/>
            <person name="Richardson P."/>
        </authorList>
    </citation>
    <scope>NUCLEOTIDE SEQUENCE [LARGE SCALE GENOMIC DNA]</scope>
    <source>
        <strain>4-46</strain>
    </source>
</reference>
<evidence type="ECO:0000255" key="1">
    <source>
        <dbReference type="HAMAP-Rule" id="MF_00453"/>
    </source>
</evidence>
<proteinExistence type="inferred from homology"/>
<dbReference type="EC" id="4.1.1.49" evidence="1"/>
<dbReference type="EMBL" id="CP000943">
    <property type="protein sequence ID" value="ACA14796.1"/>
    <property type="molecule type" value="Genomic_DNA"/>
</dbReference>
<dbReference type="RefSeq" id="WP_012330214.1">
    <property type="nucleotide sequence ID" value="NC_010511.1"/>
</dbReference>
<dbReference type="SMR" id="B0UFE2"/>
<dbReference type="STRING" id="426117.M446_0223"/>
<dbReference type="KEGG" id="met:M446_0223"/>
<dbReference type="eggNOG" id="COG1866">
    <property type="taxonomic scope" value="Bacteria"/>
</dbReference>
<dbReference type="HOGENOM" id="CLU_018247_0_1_5"/>
<dbReference type="UniPathway" id="UPA00138"/>
<dbReference type="GO" id="GO:0005829">
    <property type="term" value="C:cytosol"/>
    <property type="evidence" value="ECO:0007669"/>
    <property type="project" value="TreeGrafter"/>
</dbReference>
<dbReference type="GO" id="GO:0005524">
    <property type="term" value="F:ATP binding"/>
    <property type="evidence" value="ECO:0007669"/>
    <property type="project" value="UniProtKB-UniRule"/>
</dbReference>
<dbReference type="GO" id="GO:0046872">
    <property type="term" value="F:metal ion binding"/>
    <property type="evidence" value="ECO:0007669"/>
    <property type="project" value="UniProtKB-KW"/>
</dbReference>
<dbReference type="GO" id="GO:0004612">
    <property type="term" value="F:phosphoenolpyruvate carboxykinase (ATP) activity"/>
    <property type="evidence" value="ECO:0007669"/>
    <property type="project" value="UniProtKB-UniRule"/>
</dbReference>
<dbReference type="GO" id="GO:0006094">
    <property type="term" value="P:gluconeogenesis"/>
    <property type="evidence" value="ECO:0007669"/>
    <property type="project" value="UniProtKB-UniRule"/>
</dbReference>
<dbReference type="CDD" id="cd00484">
    <property type="entry name" value="PEPCK_ATP"/>
    <property type="match status" value="1"/>
</dbReference>
<dbReference type="Gene3D" id="3.90.228.20">
    <property type="match status" value="1"/>
</dbReference>
<dbReference type="Gene3D" id="3.40.449.10">
    <property type="entry name" value="Phosphoenolpyruvate Carboxykinase, domain 1"/>
    <property type="match status" value="1"/>
</dbReference>
<dbReference type="Gene3D" id="2.170.8.10">
    <property type="entry name" value="Phosphoenolpyruvate Carboxykinase, domain 2"/>
    <property type="match status" value="1"/>
</dbReference>
<dbReference type="HAMAP" id="MF_00453">
    <property type="entry name" value="PEPCK_ATP"/>
    <property type="match status" value="1"/>
</dbReference>
<dbReference type="InterPro" id="IPR001272">
    <property type="entry name" value="PEP_carboxykinase_ATP"/>
</dbReference>
<dbReference type="InterPro" id="IPR013035">
    <property type="entry name" value="PEP_carboxykinase_C"/>
</dbReference>
<dbReference type="InterPro" id="IPR008210">
    <property type="entry name" value="PEP_carboxykinase_N"/>
</dbReference>
<dbReference type="NCBIfam" id="TIGR00224">
    <property type="entry name" value="pckA"/>
    <property type="match status" value="1"/>
</dbReference>
<dbReference type="NCBIfam" id="NF006820">
    <property type="entry name" value="PRK09344.1-2"/>
    <property type="match status" value="1"/>
</dbReference>
<dbReference type="NCBIfam" id="NF006821">
    <property type="entry name" value="PRK09344.1-3"/>
    <property type="match status" value="1"/>
</dbReference>
<dbReference type="NCBIfam" id="NF006822">
    <property type="entry name" value="PRK09344.1-4"/>
    <property type="match status" value="1"/>
</dbReference>
<dbReference type="PANTHER" id="PTHR30031:SF0">
    <property type="entry name" value="PHOSPHOENOLPYRUVATE CARBOXYKINASE (ATP)"/>
    <property type="match status" value="1"/>
</dbReference>
<dbReference type="PANTHER" id="PTHR30031">
    <property type="entry name" value="PHOSPHOENOLPYRUVATE CARBOXYKINASE ATP"/>
    <property type="match status" value="1"/>
</dbReference>
<dbReference type="Pfam" id="PF01293">
    <property type="entry name" value="PEPCK_ATP"/>
    <property type="match status" value="1"/>
</dbReference>
<dbReference type="PIRSF" id="PIRSF006294">
    <property type="entry name" value="PEP_crbxkin"/>
    <property type="match status" value="1"/>
</dbReference>
<dbReference type="SUPFAM" id="SSF68923">
    <property type="entry name" value="PEP carboxykinase N-terminal domain"/>
    <property type="match status" value="1"/>
</dbReference>
<dbReference type="SUPFAM" id="SSF53795">
    <property type="entry name" value="PEP carboxykinase-like"/>
    <property type="match status" value="1"/>
</dbReference>
<comment type="function">
    <text evidence="1">Involved in the gluconeogenesis. Catalyzes the conversion of oxaloacetate (OAA) to phosphoenolpyruvate (PEP) through direct phosphoryl transfer between the nucleoside triphosphate and OAA.</text>
</comment>
<comment type="catalytic activity">
    <reaction evidence="1">
        <text>oxaloacetate + ATP = phosphoenolpyruvate + ADP + CO2</text>
        <dbReference type="Rhea" id="RHEA:18617"/>
        <dbReference type="ChEBI" id="CHEBI:16452"/>
        <dbReference type="ChEBI" id="CHEBI:16526"/>
        <dbReference type="ChEBI" id="CHEBI:30616"/>
        <dbReference type="ChEBI" id="CHEBI:58702"/>
        <dbReference type="ChEBI" id="CHEBI:456216"/>
        <dbReference type="EC" id="4.1.1.49"/>
    </reaction>
</comment>
<comment type="cofactor">
    <cofactor evidence="1">
        <name>Mn(2+)</name>
        <dbReference type="ChEBI" id="CHEBI:29035"/>
    </cofactor>
    <text evidence="1">Binds 1 Mn(2+) ion per subunit.</text>
</comment>
<comment type="pathway">
    <text evidence="1">Carbohydrate biosynthesis; gluconeogenesis.</text>
</comment>
<comment type="subcellular location">
    <subcellularLocation>
        <location evidence="1">Cytoplasm</location>
    </subcellularLocation>
</comment>
<comment type="similarity">
    <text evidence="1">Belongs to the phosphoenolpyruvate carboxykinase (ATP) family.</text>
</comment>
<name>PCKA_METS4</name>
<protein>
    <recommendedName>
        <fullName evidence="1">Phosphoenolpyruvate carboxykinase (ATP)</fullName>
        <shortName evidence="1">PCK</shortName>
        <shortName evidence="1">PEP carboxykinase</shortName>
        <shortName evidence="1">PEPCK</shortName>
        <ecNumber evidence="1">4.1.1.49</ecNumber>
    </recommendedName>
</protein>
<accession>B0UFE2</accession>
<keyword id="KW-0067">ATP-binding</keyword>
<keyword id="KW-0963">Cytoplasm</keyword>
<keyword id="KW-0210">Decarboxylase</keyword>
<keyword id="KW-0312">Gluconeogenesis</keyword>
<keyword id="KW-0456">Lyase</keyword>
<keyword id="KW-0464">Manganese</keyword>
<keyword id="KW-0479">Metal-binding</keyword>
<keyword id="KW-0547">Nucleotide-binding</keyword>
<gene>
    <name evidence="1" type="primary">pckA</name>
    <name type="ordered locus">M446_0223</name>
</gene>